<protein>
    <recommendedName>
        <fullName>Leucine aminopeptidase 1</fullName>
        <ecNumber>3.4.11.-</ecNumber>
    </recommendedName>
    <alternativeName>
        <fullName>Leucyl aminopeptidase 1</fullName>
        <shortName>LAP1</shortName>
    </alternativeName>
</protein>
<evidence type="ECO:0000250" key="1"/>
<evidence type="ECO:0000255" key="2"/>
<evidence type="ECO:0000305" key="3"/>
<dbReference type="EC" id="3.4.11.-"/>
<dbReference type="EMBL" id="GL537441">
    <property type="protein sequence ID" value="EFQ86364.1"/>
    <property type="molecule type" value="Genomic_DNA"/>
</dbReference>
<dbReference type="RefSeq" id="XP_003305554.1">
    <property type="nucleotide sequence ID" value="XM_003305506.1"/>
</dbReference>
<dbReference type="SMR" id="E3S6P9"/>
<dbReference type="STRING" id="861557.E3S6P9"/>
<dbReference type="MEROPS" id="M28.022"/>
<dbReference type="GlyCosmos" id="E3S6P9">
    <property type="glycosylation" value="1 site, No reported glycans"/>
</dbReference>
<dbReference type="EnsemblFungi" id="EFQ86364">
    <property type="protein sequence ID" value="EFQ86364"/>
    <property type="gene ID" value="PTT_18429"/>
</dbReference>
<dbReference type="KEGG" id="pte:PTT_18429"/>
<dbReference type="eggNOG" id="KOG2195">
    <property type="taxonomic scope" value="Eukaryota"/>
</dbReference>
<dbReference type="HOGENOM" id="CLU_025866_0_0_1"/>
<dbReference type="OrthoDB" id="2214at2759"/>
<dbReference type="Proteomes" id="UP000001067">
    <property type="component" value="Unassembled WGS sequence"/>
</dbReference>
<dbReference type="GO" id="GO:0005576">
    <property type="term" value="C:extracellular region"/>
    <property type="evidence" value="ECO:0007669"/>
    <property type="project" value="UniProtKB-SubCell"/>
</dbReference>
<dbReference type="GO" id="GO:0004177">
    <property type="term" value="F:aminopeptidase activity"/>
    <property type="evidence" value="ECO:0007669"/>
    <property type="project" value="UniProtKB-KW"/>
</dbReference>
<dbReference type="GO" id="GO:0046872">
    <property type="term" value="F:metal ion binding"/>
    <property type="evidence" value="ECO:0007669"/>
    <property type="project" value="UniProtKB-KW"/>
</dbReference>
<dbReference type="GO" id="GO:0008235">
    <property type="term" value="F:metalloexopeptidase activity"/>
    <property type="evidence" value="ECO:0007669"/>
    <property type="project" value="InterPro"/>
</dbReference>
<dbReference type="GO" id="GO:0006508">
    <property type="term" value="P:proteolysis"/>
    <property type="evidence" value="ECO:0007669"/>
    <property type="project" value="UniProtKB-KW"/>
</dbReference>
<dbReference type="CDD" id="cd03879">
    <property type="entry name" value="M28_AAP"/>
    <property type="match status" value="1"/>
</dbReference>
<dbReference type="FunFam" id="3.40.630.10:FF:000042">
    <property type="entry name" value="Peptide hydrolase"/>
    <property type="match status" value="1"/>
</dbReference>
<dbReference type="Gene3D" id="3.40.630.10">
    <property type="entry name" value="Zn peptidases"/>
    <property type="match status" value="1"/>
</dbReference>
<dbReference type="InterPro" id="IPR045175">
    <property type="entry name" value="M28_fam"/>
</dbReference>
<dbReference type="InterPro" id="IPR007484">
    <property type="entry name" value="Peptidase_M28"/>
</dbReference>
<dbReference type="PANTHER" id="PTHR12147:SF56">
    <property type="entry name" value="AMINOPEPTIDASE YDR415C-RELATED"/>
    <property type="match status" value="1"/>
</dbReference>
<dbReference type="PANTHER" id="PTHR12147">
    <property type="entry name" value="METALLOPEPTIDASE M28 FAMILY MEMBER"/>
    <property type="match status" value="1"/>
</dbReference>
<dbReference type="Pfam" id="PF04389">
    <property type="entry name" value="Peptidase_M28"/>
    <property type="match status" value="1"/>
</dbReference>
<dbReference type="SUPFAM" id="SSF53187">
    <property type="entry name" value="Zn-dependent exopeptidases"/>
    <property type="match status" value="1"/>
</dbReference>
<sequence>MKSAALLLPLYAAAFAAAAFHHEHAQAVIQEQQLTIVEPDEYLIELSPGETRWVTENEKWELRKKNINFFDITHNAELGTLKRRINAASVEYPSKPVFNETLAPLLKELDKNNMRAHLETFTSFHTRYYKSQYGVQSSAWLLDQVKKTLADAGASKASVKAFPHPWGQSSIIATIPGKSDKTIVIGAHQDSINLFFPAFLAAPGADDDGSGTVTILEALRVLLKSDEILKGEADNTIEFHWYSAEEGGLLGSQAIFQSYEKEARDVKAMLQQDMTGYVQKTLDAGEPESVGVITDFVDPGLTEFIKKIITVYCDIPYVLTKCGYACSDHASASKAGYPSAFVIESDFKYSDNKIHTTEDKIEYLSFDHMLQHARMTLALAYELAFAEFK</sequence>
<accession>E3S6P9</accession>
<name>LAP1_PYRTT</name>
<comment type="function">
    <text evidence="1">Extracellular aminopeptidase that allows assimilation of proteinaceous substrates.</text>
</comment>
<comment type="cofactor">
    <cofactor evidence="1">
        <name>Zn(2+)</name>
        <dbReference type="ChEBI" id="CHEBI:29105"/>
    </cofactor>
    <text evidence="1">Binds 2 Zn(2+) ions per subunit.</text>
</comment>
<comment type="subunit">
    <text evidence="1">Monomer.</text>
</comment>
<comment type="subcellular location">
    <subcellularLocation>
        <location evidence="1">Secreted</location>
    </subcellularLocation>
</comment>
<comment type="similarity">
    <text evidence="3">Belongs to the peptidase M28 family. M28E subfamily.</text>
</comment>
<proteinExistence type="inferred from homology"/>
<organism>
    <name type="scientific">Pyrenophora teres f. teres (strain 0-1)</name>
    <name type="common">Barley net blotch fungus</name>
    <name type="synonym">Drechslera teres f. teres</name>
    <dbReference type="NCBI Taxonomy" id="861557"/>
    <lineage>
        <taxon>Eukaryota</taxon>
        <taxon>Fungi</taxon>
        <taxon>Dikarya</taxon>
        <taxon>Ascomycota</taxon>
        <taxon>Pezizomycotina</taxon>
        <taxon>Dothideomycetes</taxon>
        <taxon>Pleosporomycetidae</taxon>
        <taxon>Pleosporales</taxon>
        <taxon>Pleosporineae</taxon>
        <taxon>Pleosporaceae</taxon>
        <taxon>Pyrenophora</taxon>
    </lineage>
</organism>
<reference key="1">
    <citation type="journal article" date="2010" name="Genome Biol.">
        <title>A first genome assembly of the barley fungal pathogen Pyrenophora teres f. teres.</title>
        <authorList>
            <person name="Ellwood S.R."/>
            <person name="Liu Z."/>
            <person name="Syme R.A."/>
            <person name="Lai Z."/>
            <person name="Hane J.K."/>
            <person name="Keiper F."/>
            <person name="Moffat C.S."/>
            <person name="Oliver R.P."/>
            <person name="Friesen T.L."/>
        </authorList>
    </citation>
    <scope>NUCLEOTIDE SEQUENCE [LARGE SCALE GENOMIC DNA]</scope>
    <source>
        <strain>0-1</strain>
    </source>
</reference>
<feature type="signal peptide" evidence="2">
    <location>
        <begin position="1"/>
        <end position="18"/>
    </location>
</feature>
<feature type="propeptide" id="PRO_0000412442" evidence="1">
    <location>
        <begin position="19"/>
        <end position="89"/>
    </location>
</feature>
<feature type="chain" id="PRO_0000412443" description="Leucine aminopeptidase 1">
    <location>
        <begin position="90"/>
        <end position="389"/>
    </location>
</feature>
<feature type="binding site" evidence="1">
    <location>
        <position position="188"/>
    </location>
    <ligand>
        <name>Zn(2+)</name>
        <dbReference type="ChEBI" id="CHEBI:29105"/>
        <label>1</label>
    </ligand>
</feature>
<feature type="binding site" evidence="1">
    <location>
        <position position="207"/>
    </location>
    <ligand>
        <name>Zn(2+)</name>
        <dbReference type="ChEBI" id="CHEBI:29105"/>
        <label>1</label>
    </ligand>
</feature>
<feature type="binding site" evidence="1">
    <location>
        <position position="207"/>
    </location>
    <ligand>
        <name>Zn(2+)</name>
        <dbReference type="ChEBI" id="CHEBI:29105"/>
        <label>2</label>
        <note>catalytic</note>
    </ligand>
</feature>
<feature type="binding site" evidence="1">
    <location>
        <position position="246"/>
    </location>
    <ligand>
        <name>Zn(2+)</name>
        <dbReference type="ChEBI" id="CHEBI:29105"/>
        <label>2</label>
        <note>catalytic</note>
    </ligand>
</feature>
<feature type="binding site" evidence="1">
    <location>
        <position position="273"/>
    </location>
    <ligand>
        <name>Zn(2+)</name>
        <dbReference type="ChEBI" id="CHEBI:29105"/>
        <label>1</label>
    </ligand>
</feature>
<feature type="binding site" evidence="1">
    <location>
        <position position="355"/>
    </location>
    <ligand>
        <name>Zn(2+)</name>
        <dbReference type="ChEBI" id="CHEBI:29105"/>
        <label>2</label>
        <note>catalytic</note>
    </ligand>
</feature>
<feature type="glycosylation site" description="N-linked (GlcNAc...) asparagine" evidence="2">
    <location>
        <position position="99"/>
    </location>
</feature>
<feature type="disulfide bond" evidence="1">
    <location>
        <begin position="322"/>
        <end position="326"/>
    </location>
</feature>
<keyword id="KW-0031">Aminopeptidase</keyword>
<keyword id="KW-1015">Disulfide bond</keyword>
<keyword id="KW-0325">Glycoprotein</keyword>
<keyword id="KW-0378">Hydrolase</keyword>
<keyword id="KW-0479">Metal-binding</keyword>
<keyword id="KW-0645">Protease</keyword>
<keyword id="KW-1185">Reference proteome</keyword>
<keyword id="KW-0964">Secreted</keyword>
<keyword id="KW-0732">Signal</keyword>
<keyword id="KW-0862">Zinc</keyword>
<keyword id="KW-0865">Zymogen</keyword>
<gene>
    <name type="primary">lap1</name>
    <name type="ORF">PTT_18429</name>
</gene>